<dbReference type="EMBL" id="X75780">
    <property type="protein sequence ID" value="CAA53404.1"/>
    <property type="molecule type" value="Genomic_DNA"/>
</dbReference>
<dbReference type="EMBL" id="Z28070">
    <property type="protein sequence ID" value="CAA81907.1"/>
    <property type="molecule type" value="Genomic_DNA"/>
</dbReference>
<dbReference type="EMBL" id="AY558311">
    <property type="protein sequence ID" value="AAS56637.1"/>
    <property type="molecule type" value="Genomic_DNA"/>
</dbReference>
<dbReference type="EMBL" id="BK006944">
    <property type="protein sequence ID" value="DAA09086.1"/>
    <property type="molecule type" value="Genomic_DNA"/>
</dbReference>
<dbReference type="PIR" id="S37892">
    <property type="entry name" value="S37892"/>
</dbReference>
<dbReference type="RefSeq" id="NP_012853.1">
    <property type="nucleotide sequence ID" value="NM_001179636.1"/>
</dbReference>
<dbReference type="SMR" id="P36087"/>
<dbReference type="BioGRID" id="34062">
    <property type="interactions" value="12"/>
</dbReference>
<dbReference type="DIP" id="DIP-1804N"/>
<dbReference type="FunCoup" id="P36087">
    <property type="interactions" value="37"/>
</dbReference>
<dbReference type="IntAct" id="P36087">
    <property type="interactions" value="1"/>
</dbReference>
<dbReference type="MINT" id="P36087"/>
<dbReference type="STRING" id="4932.YKL070W"/>
<dbReference type="PaxDb" id="4932-YKL070W"/>
<dbReference type="EnsemblFungi" id="YKL070W_mRNA">
    <property type="protein sequence ID" value="YKL070W"/>
    <property type="gene ID" value="YKL070W"/>
</dbReference>
<dbReference type="GeneID" id="853793"/>
<dbReference type="KEGG" id="sce:YKL070W"/>
<dbReference type="AGR" id="SGD:S000001553"/>
<dbReference type="SGD" id="S000001553">
    <property type="gene designation" value="YKL070W"/>
</dbReference>
<dbReference type="VEuPathDB" id="FungiDB:YKL070W"/>
<dbReference type="eggNOG" id="ENOG502RCZR">
    <property type="taxonomic scope" value="Eukaryota"/>
</dbReference>
<dbReference type="HOGENOM" id="CLU_065853_2_0_1"/>
<dbReference type="InParanoid" id="P36087"/>
<dbReference type="OMA" id="YGTPRII"/>
<dbReference type="OrthoDB" id="2101473at2759"/>
<dbReference type="BioCyc" id="YEAST:G3O-31866-MONOMER"/>
<dbReference type="BioGRID-ORCS" id="853793">
    <property type="hits" value="0 hits in 10 CRISPR screens"/>
</dbReference>
<dbReference type="PRO" id="PR:P36087"/>
<dbReference type="Proteomes" id="UP000002311">
    <property type="component" value="Chromosome XI"/>
</dbReference>
<dbReference type="RNAct" id="P36087">
    <property type="molecule type" value="protein"/>
</dbReference>
<dbReference type="GO" id="GO:0005739">
    <property type="term" value="C:mitochondrion"/>
    <property type="evidence" value="ECO:0007005"/>
    <property type="project" value="SGD"/>
</dbReference>
<dbReference type="Gene3D" id="2.30.110.10">
    <property type="entry name" value="Electron Transport, Fmn-binding Protein, Chain A"/>
    <property type="match status" value="1"/>
</dbReference>
<dbReference type="InterPro" id="IPR012349">
    <property type="entry name" value="Split_barrel_FMN-bd"/>
</dbReference>
<dbReference type="InterPro" id="IPR007396">
    <property type="entry name" value="TR_PAI2-type"/>
</dbReference>
<dbReference type="PANTHER" id="PTHR35802">
    <property type="entry name" value="PROTEASE SYNTHASE AND SPORULATION PROTEIN PAI 2"/>
    <property type="match status" value="1"/>
</dbReference>
<dbReference type="PANTHER" id="PTHR35802:SF1">
    <property type="entry name" value="PROTEASE SYNTHASE AND SPORULATION PROTEIN PAI 2"/>
    <property type="match status" value="1"/>
</dbReference>
<dbReference type="Pfam" id="PF04299">
    <property type="entry name" value="FMN_bind_2"/>
    <property type="match status" value="1"/>
</dbReference>
<dbReference type="PIRSF" id="PIRSF010372">
    <property type="entry name" value="PaiB"/>
    <property type="match status" value="1"/>
</dbReference>
<dbReference type="SUPFAM" id="SSF50475">
    <property type="entry name" value="FMN-binding split barrel"/>
    <property type="match status" value="1"/>
</dbReference>
<organism>
    <name type="scientific">Saccharomyces cerevisiae (strain ATCC 204508 / S288c)</name>
    <name type="common">Baker's yeast</name>
    <dbReference type="NCBI Taxonomy" id="559292"/>
    <lineage>
        <taxon>Eukaryota</taxon>
        <taxon>Fungi</taxon>
        <taxon>Dikarya</taxon>
        <taxon>Ascomycota</taxon>
        <taxon>Saccharomycotina</taxon>
        <taxon>Saccharomycetes</taxon>
        <taxon>Saccharomycetales</taxon>
        <taxon>Saccharomycetaceae</taxon>
        <taxon>Saccharomyces</taxon>
    </lineage>
</organism>
<keyword id="KW-1185">Reference proteome</keyword>
<gene>
    <name type="ordered locus">YKL070W</name>
    <name type="ORF">YKL343</name>
</gene>
<sequence length="169" mass="19828">MYIPKHFESMELSRYKLSKKPPLGTLFSSKASRQGFFGWRTSSNKDDPDFGMCASHIPFVFVEFDNGEHKLIAHLARKNKHVEMLERVQKCLVVFQSVDSYISPAWFPMKKKTHKFVPTWDFAAVHVYGTPRIIRDDKDWLINMLSTLTDQEEEKRPEGENVRSKVERF</sequence>
<proteinExistence type="predicted"/>
<reference key="1">
    <citation type="journal article" date="1994" name="Yeast">
        <title>Sequence of a 20.7 kb region of yeast chromosome XI includes the NUP100 gene, an open reading frame (ORF) possibly representing a nucleoside diphosphate kinase gene, tRNAs for His, Val and Trp in addition to seven ORFs with weak or no significant similarity to known proteins.</title>
        <authorList>
            <person name="Rasmussen S.W."/>
        </authorList>
    </citation>
    <scope>NUCLEOTIDE SEQUENCE [GENOMIC DNA]</scope>
    <source>
        <strain>ATCC 204508 / S288c</strain>
    </source>
</reference>
<reference key="2">
    <citation type="journal article" date="1994" name="Nature">
        <title>Complete DNA sequence of yeast chromosome XI.</title>
        <authorList>
            <person name="Dujon B."/>
            <person name="Alexandraki D."/>
            <person name="Andre B."/>
            <person name="Ansorge W."/>
            <person name="Baladron V."/>
            <person name="Ballesta J.P.G."/>
            <person name="Banrevi A."/>
            <person name="Bolle P.-A."/>
            <person name="Bolotin-Fukuhara M."/>
            <person name="Bossier P."/>
            <person name="Bou G."/>
            <person name="Boyer J."/>
            <person name="Buitrago M.J."/>
            <person name="Cheret G."/>
            <person name="Colleaux L."/>
            <person name="Daignan-Fornier B."/>
            <person name="del Rey F."/>
            <person name="Dion C."/>
            <person name="Domdey H."/>
            <person name="Duesterhoeft A."/>
            <person name="Duesterhus S."/>
            <person name="Entian K.-D."/>
            <person name="Erfle H."/>
            <person name="Esteban P.F."/>
            <person name="Feldmann H."/>
            <person name="Fernandes L."/>
            <person name="Fobo G.M."/>
            <person name="Fritz C."/>
            <person name="Fukuhara H."/>
            <person name="Gabel C."/>
            <person name="Gaillon L."/>
            <person name="Garcia-Cantalejo J.M."/>
            <person name="Garcia-Ramirez J.J."/>
            <person name="Gent M.E."/>
            <person name="Ghazvini M."/>
            <person name="Goffeau A."/>
            <person name="Gonzalez A."/>
            <person name="Grothues D."/>
            <person name="Guerreiro P."/>
            <person name="Hegemann J.H."/>
            <person name="Hewitt N."/>
            <person name="Hilger F."/>
            <person name="Hollenberg C.P."/>
            <person name="Horaitis O."/>
            <person name="Indge K.J."/>
            <person name="Jacquier A."/>
            <person name="James C.M."/>
            <person name="Jauniaux J.-C."/>
            <person name="Jimenez A."/>
            <person name="Keuchel H."/>
            <person name="Kirchrath L."/>
            <person name="Kleine K."/>
            <person name="Koetter P."/>
            <person name="Legrain P."/>
            <person name="Liebl S."/>
            <person name="Louis E.J."/>
            <person name="Maia e Silva A."/>
            <person name="Marck C."/>
            <person name="Monnier A.-L."/>
            <person name="Moestl D."/>
            <person name="Mueller S."/>
            <person name="Obermaier B."/>
            <person name="Oliver S.G."/>
            <person name="Pallier C."/>
            <person name="Pascolo S."/>
            <person name="Pfeiffer F."/>
            <person name="Philippsen P."/>
            <person name="Planta R.J."/>
            <person name="Pohl F.M."/>
            <person name="Pohl T.M."/>
            <person name="Poehlmann R."/>
            <person name="Portetelle D."/>
            <person name="Purnelle B."/>
            <person name="Puzos V."/>
            <person name="Ramezani Rad M."/>
            <person name="Rasmussen S.W."/>
            <person name="Remacha M.A."/>
            <person name="Revuelta J.L."/>
            <person name="Richard G.-F."/>
            <person name="Rieger M."/>
            <person name="Rodrigues-Pousada C."/>
            <person name="Rose M."/>
            <person name="Rupp T."/>
            <person name="Santos M.A."/>
            <person name="Schwager C."/>
            <person name="Sensen C."/>
            <person name="Skala J."/>
            <person name="Soares H."/>
            <person name="Sor F."/>
            <person name="Stegemann J."/>
            <person name="Tettelin H."/>
            <person name="Thierry A."/>
            <person name="Tzermia M."/>
            <person name="Urrestarazu L.A."/>
            <person name="van Dyck L."/>
            <person name="van Vliet-Reedijk J.C."/>
            <person name="Valens M."/>
            <person name="Vandenbol M."/>
            <person name="Vilela C."/>
            <person name="Vissers S."/>
            <person name="von Wettstein D."/>
            <person name="Voss H."/>
            <person name="Wiemann S."/>
            <person name="Xu G."/>
            <person name="Zimmermann J."/>
            <person name="Haasemann M."/>
            <person name="Becker I."/>
            <person name="Mewes H.-W."/>
        </authorList>
    </citation>
    <scope>NUCLEOTIDE SEQUENCE [LARGE SCALE GENOMIC DNA]</scope>
    <source>
        <strain>ATCC 204508 / S288c</strain>
    </source>
</reference>
<reference key="3">
    <citation type="journal article" date="2014" name="G3 (Bethesda)">
        <title>The reference genome sequence of Saccharomyces cerevisiae: Then and now.</title>
        <authorList>
            <person name="Engel S.R."/>
            <person name="Dietrich F.S."/>
            <person name="Fisk D.G."/>
            <person name="Binkley G."/>
            <person name="Balakrishnan R."/>
            <person name="Costanzo M.C."/>
            <person name="Dwight S.S."/>
            <person name="Hitz B.C."/>
            <person name="Karra K."/>
            <person name="Nash R.S."/>
            <person name="Weng S."/>
            <person name="Wong E.D."/>
            <person name="Lloyd P."/>
            <person name="Skrzypek M.S."/>
            <person name="Miyasato S.R."/>
            <person name="Simison M."/>
            <person name="Cherry J.M."/>
        </authorList>
    </citation>
    <scope>GENOME REANNOTATION</scope>
    <source>
        <strain>ATCC 204508 / S288c</strain>
    </source>
</reference>
<reference key="4">
    <citation type="journal article" date="2007" name="Genome Res.">
        <title>Approaching a complete repository of sequence-verified protein-encoding clones for Saccharomyces cerevisiae.</title>
        <authorList>
            <person name="Hu Y."/>
            <person name="Rolfs A."/>
            <person name="Bhullar B."/>
            <person name="Murthy T.V.S."/>
            <person name="Zhu C."/>
            <person name="Berger M.F."/>
            <person name="Camargo A.A."/>
            <person name="Kelley F."/>
            <person name="McCarron S."/>
            <person name="Jepson D."/>
            <person name="Richardson A."/>
            <person name="Raphael J."/>
            <person name="Moreira D."/>
            <person name="Taycher E."/>
            <person name="Zuo D."/>
            <person name="Mohr S."/>
            <person name="Kane M.F."/>
            <person name="Williamson J."/>
            <person name="Simpson A.J.G."/>
            <person name="Bulyk M.L."/>
            <person name="Harlow E."/>
            <person name="Marsischky G."/>
            <person name="Kolodner R.D."/>
            <person name="LaBaer J."/>
        </authorList>
    </citation>
    <scope>NUCLEOTIDE SEQUENCE [GENOMIC DNA]</scope>
    <source>
        <strain>ATCC 204508 / S288c</strain>
    </source>
</reference>
<feature type="chain" id="PRO_0000203172" description="Uncharacterized protein YKL070W">
    <location>
        <begin position="1"/>
        <end position="169"/>
    </location>
</feature>
<protein>
    <recommendedName>
        <fullName>Uncharacterized protein YKL070W</fullName>
    </recommendedName>
</protein>
<name>YKH0_YEAST</name>
<accession>P36087</accession>
<accession>D6VXL6</accession>